<accession>A8LI68</accession>
<feature type="chain" id="PRO_1000076002" description="S-adenosylmethionine:tRNA ribosyltransferase-isomerase">
    <location>
        <begin position="1"/>
        <end position="353"/>
    </location>
</feature>
<proteinExistence type="inferred from homology"/>
<keyword id="KW-0963">Cytoplasm</keyword>
<keyword id="KW-0671">Queuosine biosynthesis</keyword>
<keyword id="KW-1185">Reference proteome</keyword>
<keyword id="KW-0949">S-adenosyl-L-methionine</keyword>
<keyword id="KW-0808">Transferase</keyword>
<name>QUEA_DINSH</name>
<evidence type="ECO:0000255" key="1">
    <source>
        <dbReference type="HAMAP-Rule" id="MF_00113"/>
    </source>
</evidence>
<comment type="function">
    <text evidence="1">Transfers and isomerizes the ribose moiety from AdoMet to the 7-aminomethyl group of 7-deazaguanine (preQ1-tRNA) to give epoxyqueuosine (oQ-tRNA).</text>
</comment>
<comment type="catalytic activity">
    <reaction evidence="1">
        <text>7-aminomethyl-7-carbaguanosine(34) in tRNA + S-adenosyl-L-methionine = epoxyqueuosine(34) in tRNA + adenine + L-methionine + 2 H(+)</text>
        <dbReference type="Rhea" id="RHEA:32155"/>
        <dbReference type="Rhea" id="RHEA-COMP:10342"/>
        <dbReference type="Rhea" id="RHEA-COMP:18582"/>
        <dbReference type="ChEBI" id="CHEBI:15378"/>
        <dbReference type="ChEBI" id="CHEBI:16708"/>
        <dbReference type="ChEBI" id="CHEBI:57844"/>
        <dbReference type="ChEBI" id="CHEBI:59789"/>
        <dbReference type="ChEBI" id="CHEBI:82833"/>
        <dbReference type="ChEBI" id="CHEBI:194443"/>
        <dbReference type="EC" id="2.4.99.17"/>
    </reaction>
</comment>
<comment type="pathway">
    <text evidence="1">tRNA modification; tRNA-queuosine biosynthesis.</text>
</comment>
<comment type="subunit">
    <text evidence="1">Monomer.</text>
</comment>
<comment type="subcellular location">
    <subcellularLocation>
        <location evidence="1">Cytoplasm</location>
    </subcellularLocation>
</comment>
<comment type="similarity">
    <text evidence="1">Belongs to the QueA family.</text>
</comment>
<reference key="1">
    <citation type="journal article" date="2010" name="ISME J.">
        <title>The complete genome sequence of the algal symbiont Dinoroseobacter shibae: a hitchhiker's guide to life in the sea.</title>
        <authorList>
            <person name="Wagner-Dobler I."/>
            <person name="Ballhausen B."/>
            <person name="Berger M."/>
            <person name="Brinkhoff T."/>
            <person name="Buchholz I."/>
            <person name="Bunk B."/>
            <person name="Cypionka H."/>
            <person name="Daniel R."/>
            <person name="Drepper T."/>
            <person name="Gerdts G."/>
            <person name="Hahnke S."/>
            <person name="Han C."/>
            <person name="Jahn D."/>
            <person name="Kalhoefer D."/>
            <person name="Kiss H."/>
            <person name="Klenk H.P."/>
            <person name="Kyrpides N."/>
            <person name="Liebl W."/>
            <person name="Liesegang H."/>
            <person name="Meincke L."/>
            <person name="Pati A."/>
            <person name="Petersen J."/>
            <person name="Piekarski T."/>
            <person name="Pommerenke C."/>
            <person name="Pradella S."/>
            <person name="Pukall R."/>
            <person name="Rabus R."/>
            <person name="Stackebrandt E."/>
            <person name="Thole S."/>
            <person name="Thompson L."/>
            <person name="Tielen P."/>
            <person name="Tomasch J."/>
            <person name="von Jan M."/>
            <person name="Wanphrut N."/>
            <person name="Wichels A."/>
            <person name="Zech H."/>
            <person name="Simon M."/>
        </authorList>
    </citation>
    <scope>NUCLEOTIDE SEQUENCE [LARGE SCALE GENOMIC DNA]</scope>
    <source>
        <strain>DSM 16493 / NCIMB 14021 / DFL 12</strain>
    </source>
</reference>
<sequence>MHLSDFDFDLPETLIATRPARPRSSARLLVAEARGPFRDRRVTDLVDELQPGDRLVLNNTKVIPARLFGTRHRDSAQGPVSAKVEITLLEPASEGWTALAKPLRKLAEGEEIVFSDALRATVAERGADRVRLVFNCTGDDFDAALAQAGAMPLPPYIAAKRAADAQDRDDYQTVFAARKGAVAAPTASLHFDEALLAALRARGVEFSFVTLHVGAGTFLPVKVDDVTTHKMHSEWGEISDQAAAEILATRADGRRVIPVGTTALRLIETAAAQPGGFGPWEGDTDIFIYPGFEFRITDGLMTNFHLPKSTLMMLVSALMGAERIREIYAHAIAQEYRFFSYGDSSLLLPDRGA</sequence>
<organism>
    <name type="scientific">Dinoroseobacter shibae (strain DSM 16493 / NCIMB 14021 / DFL 12)</name>
    <dbReference type="NCBI Taxonomy" id="398580"/>
    <lineage>
        <taxon>Bacteria</taxon>
        <taxon>Pseudomonadati</taxon>
        <taxon>Pseudomonadota</taxon>
        <taxon>Alphaproteobacteria</taxon>
        <taxon>Rhodobacterales</taxon>
        <taxon>Roseobacteraceae</taxon>
        <taxon>Dinoroseobacter</taxon>
    </lineage>
</organism>
<dbReference type="EC" id="2.4.99.17" evidence="1"/>
<dbReference type="EMBL" id="CP000830">
    <property type="protein sequence ID" value="ABV92922.1"/>
    <property type="molecule type" value="Genomic_DNA"/>
</dbReference>
<dbReference type="RefSeq" id="WP_012177852.1">
    <property type="nucleotide sequence ID" value="NC_009952.1"/>
</dbReference>
<dbReference type="SMR" id="A8LI68"/>
<dbReference type="STRING" id="398580.Dshi_1180"/>
<dbReference type="KEGG" id="dsh:Dshi_1180"/>
<dbReference type="eggNOG" id="COG0809">
    <property type="taxonomic scope" value="Bacteria"/>
</dbReference>
<dbReference type="HOGENOM" id="CLU_039110_1_1_5"/>
<dbReference type="OrthoDB" id="9805933at2"/>
<dbReference type="UniPathway" id="UPA00392"/>
<dbReference type="Proteomes" id="UP000006833">
    <property type="component" value="Chromosome"/>
</dbReference>
<dbReference type="GO" id="GO:0005737">
    <property type="term" value="C:cytoplasm"/>
    <property type="evidence" value="ECO:0007669"/>
    <property type="project" value="UniProtKB-SubCell"/>
</dbReference>
<dbReference type="GO" id="GO:0051075">
    <property type="term" value="F:S-adenosylmethionine:tRNA ribosyltransferase-isomerase activity"/>
    <property type="evidence" value="ECO:0007669"/>
    <property type="project" value="UniProtKB-EC"/>
</dbReference>
<dbReference type="GO" id="GO:0008616">
    <property type="term" value="P:queuosine biosynthetic process"/>
    <property type="evidence" value="ECO:0007669"/>
    <property type="project" value="UniProtKB-UniRule"/>
</dbReference>
<dbReference type="GO" id="GO:0002099">
    <property type="term" value="P:tRNA wobble guanine modification"/>
    <property type="evidence" value="ECO:0007669"/>
    <property type="project" value="TreeGrafter"/>
</dbReference>
<dbReference type="FunFam" id="3.40.1780.10:FF:000001">
    <property type="entry name" value="S-adenosylmethionine:tRNA ribosyltransferase-isomerase"/>
    <property type="match status" value="1"/>
</dbReference>
<dbReference type="Gene3D" id="2.40.10.240">
    <property type="entry name" value="QueA-like"/>
    <property type="match status" value="1"/>
</dbReference>
<dbReference type="Gene3D" id="3.40.1780.10">
    <property type="entry name" value="QueA-like"/>
    <property type="match status" value="1"/>
</dbReference>
<dbReference type="HAMAP" id="MF_00113">
    <property type="entry name" value="QueA"/>
    <property type="match status" value="1"/>
</dbReference>
<dbReference type="InterPro" id="IPR003699">
    <property type="entry name" value="QueA"/>
</dbReference>
<dbReference type="InterPro" id="IPR042118">
    <property type="entry name" value="QueA_dom1"/>
</dbReference>
<dbReference type="InterPro" id="IPR042119">
    <property type="entry name" value="QueA_dom2"/>
</dbReference>
<dbReference type="InterPro" id="IPR036100">
    <property type="entry name" value="QueA_sf"/>
</dbReference>
<dbReference type="NCBIfam" id="NF001140">
    <property type="entry name" value="PRK00147.1"/>
    <property type="match status" value="1"/>
</dbReference>
<dbReference type="NCBIfam" id="TIGR00113">
    <property type="entry name" value="queA"/>
    <property type="match status" value="1"/>
</dbReference>
<dbReference type="PANTHER" id="PTHR30307">
    <property type="entry name" value="S-ADENOSYLMETHIONINE:TRNA RIBOSYLTRANSFERASE-ISOMERASE"/>
    <property type="match status" value="1"/>
</dbReference>
<dbReference type="PANTHER" id="PTHR30307:SF0">
    <property type="entry name" value="S-ADENOSYLMETHIONINE:TRNA RIBOSYLTRANSFERASE-ISOMERASE"/>
    <property type="match status" value="1"/>
</dbReference>
<dbReference type="Pfam" id="PF02547">
    <property type="entry name" value="Queuosine_synth"/>
    <property type="match status" value="1"/>
</dbReference>
<dbReference type="SUPFAM" id="SSF111337">
    <property type="entry name" value="QueA-like"/>
    <property type="match status" value="1"/>
</dbReference>
<protein>
    <recommendedName>
        <fullName evidence="1">S-adenosylmethionine:tRNA ribosyltransferase-isomerase</fullName>
        <ecNumber evidence="1">2.4.99.17</ecNumber>
    </recommendedName>
    <alternativeName>
        <fullName evidence="1">Queuosine biosynthesis protein QueA</fullName>
    </alternativeName>
</protein>
<gene>
    <name evidence="1" type="primary">queA</name>
    <name type="ordered locus">Dshi_1180</name>
</gene>